<accession>Q92AD4</accession>
<proteinExistence type="inferred from homology"/>
<sequence length="314" mass="36146">MKQYLDLEKYVLENGTQKGDRTGTGTISTFGYQMRFDLQEGFPIMTTKRVPFKLVVSELLWFLHGDTNIRYLLQHNNNIWNEWAFERFVKSADYKGEDMTDFGLRAERDPAFKEVYQAEMEKFKTRILEDETFANKYGELGNIYGKQWREWKTSQGETIDQLADLIEMIKTNPNSRRLIVSAWNPEDIPNMALPPCHSLFQFYVADGKLSCQLYQRSADIFLGVPFNIASYALLTHLIAREVGLDVGEFIHTMGDAHLYNNHIEQVKEQLSRTPHALPKLVLSDKPATIFDFEVADISLDGYNPDPAIKAPISV</sequence>
<organism>
    <name type="scientific">Listeria innocua serovar 6a (strain ATCC BAA-680 / CLIP 11262)</name>
    <dbReference type="NCBI Taxonomy" id="272626"/>
    <lineage>
        <taxon>Bacteria</taxon>
        <taxon>Bacillati</taxon>
        <taxon>Bacillota</taxon>
        <taxon>Bacilli</taxon>
        <taxon>Bacillales</taxon>
        <taxon>Listeriaceae</taxon>
        <taxon>Listeria</taxon>
    </lineage>
</organism>
<gene>
    <name evidence="1" type="primary">thyA</name>
    <name type="ordered locus">lin1988</name>
</gene>
<keyword id="KW-0963">Cytoplasm</keyword>
<keyword id="KW-0489">Methyltransferase</keyword>
<keyword id="KW-0545">Nucleotide biosynthesis</keyword>
<keyword id="KW-0808">Transferase</keyword>
<reference key="1">
    <citation type="journal article" date="2001" name="Science">
        <title>Comparative genomics of Listeria species.</title>
        <authorList>
            <person name="Glaser P."/>
            <person name="Frangeul L."/>
            <person name="Buchrieser C."/>
            <person name="Rusniok C."/>
            <person name="Amend A."/>
            <person name="Baquero F."/>
            <person name="Berche P."/>
            <person name="Bloecker H."/>
            <person name="Brandt P."/>
            <person name="Chakraborty T."/>
            <person name="Charbit A."/>
            <person name="Chetouani F."/>
            <person name="Couve E."/>
            <person name="de Daruvar A."/>
            <person name="Dehoux P."/>
            <person name="Domann E."/>
            <person name="Dominguez-Bernal G."/>
            <person name="Duchaud E."/>
            <person name="Durant L."/>
            <person name="Dussurget O."/>
            <person name="Entian K.-D."/>
            <person name="Fsihi H."/>
            <person name="Garcia-del Portillo F."/>
            <person name="Garrido P."/>
            <person name="Gautier L."/>
            <person name="Goebel W."/>
            <person name="Gomez-Lopez N."/>
            <person name="Hain T."/>
            <person name="Hauf J."/>
            <person name="Jackson D."/>
            <person name="Jones L.-M."/>
            <person name="Kaerst U."/>
            <person name="Kreft J."/>
            <person name="Kuhn M."/>
            <person name="Kunst F."/>
            <person name="Kurapkat G."/>
            <person name="Madueno E."/>
            <person name="Maitournam A."/>
            <person name="Mata Vicente J."/>
            <person name="Ng E."/>
            <person name="Nedjari H."/>
            <person name="Nordsiek G."/>
            <person name="Novella S."/>
            <person name="de Pablos B."/>
            <person name="Perez-Diaz J.-C."/>
            <person name="Purcell R."/>
            <person name="Remmel B."/>
            <person name="Rose M."/>
            <person name="Schlueter T."/>
            <person name="Simoes N."/>
            <person name="Tierrez A."/>
            <person name="Vazquez-Boland J.-A."/>
            <person name="Voss H."/>
            <person name="Wehland J."/>
            <person name="Cossart P."/>
        </authorList>
    </citation>
    <scope>NUCLEOTIDE SEQUENCE [LARGE SCALE GENOMIC DNA]</scope>
    <source>
        <strain>ATCC BAA-680 / CLIP 11262</strain>
    </source>
</reference>
<feature type="chain" id="PRO_0000140975" description="Thymidylate synthase">
    <location>
        <begin position="1"/>
        <end position="314"/>
    </location>
</feature>
<feature type="active site" description="Nucleophile" evidence="1">
    <location>
        <position position="196"/>
    </location>
</feature>
<feature type="binding site" description="in other chain" evidence="1">
    <location>
        <position position="21"/>
    </location>
    <ligand>
        <name>dUMP</name>
        <dbReference type="ChEBI" id="CHEBI:246422"/>
        <note>ligand shared between dimeric partners</note>
    </ligand>
</feature>
<feature type="binding site" evidence="1">
    <location>
        <begin position="176"/>
        <end position="177"/>
    </location>
    <ligand>
        <name>dUMP</name>
        <dbReference type="ChEBI" id="CHEBI:246422"/>
        <note>ligand shared between dimeric partners</note>
    </ligand>
</feature>
<feature type="binding site" description="in other chain" evidence="1">
    <location>
        <begin position="216"/>
        <end position="219"/>
    </location>
    <ligand>
        <name>dUMP</name>
        <dbReference type="ChEBI" id="CHEBI:246422"/>
        <note>ligand shared between dimeric partners</note>
    </ligand>
</feature>
<feature type="binding site" evidence="1">
    <location>
        <position position="219"/>
    </location>
    <ligand>
        <name>(6R)-5,10-methylene-5,6,7,8-tetrahydrofolate</name>
        <dbReference type="ChEBI" id="CHEBI:15636"/>
    </ligand>
</feature>
<feature type="binding site" description="in other chain" evidence="1">
    <location>
        <position position="227"/>
    </location>
    <ligand>
        <name>dUMP</name>
        <dbReference type="ChEBI" id="CHEBI:246422"/>
        <note>ligand shared between dimeric partners</note>
    </ligand>
</feature>
<feature type="binding site" description="in other chain" evidence="1">
    <location>
        <begin position="257"/>
        <end position="259"/>
    </location>
    <ligand>
        <name>dUMP</name>
        <dbReference type="ChEBI" id="CHEBI:246422"/>
        <note>ligand shared between dimeric partners</note>
    </ligand>
</feature>
<feature type="binding site" evidence="1">
    <location>
        <position position="313"/>
    </location>
    <ligand>
        <name>(6R)-5,10-methylene-5,6,7,8-tetrahydrofolate</name>
        <dbReference type="ChEBI" id="CHEBI:15636"/>
    </ligand>
</feature>
<evidence type="ECO:0000255" key="1">
    <source>
        <dbReference type="HAMAP-Rule" id="MF_00008"/>
    </source>
</evidence>
<dbReference type="EC" id="2.1.1.45" evidence="1"/>
<dbReference type="EMBL" id="AL596170">
    <property type="protein sequence ID" value="CAC97218.1"/>
    <property type="molecule type" value="Genomic_DNA"/>
</dbReference>
<dbReference type="PIR" id="AB1681">
    <property type="entry name" value="AB1681"/>
</dbReference>
<dbReference type="RefSeq" id="WP_003769361.1">
    <property type="nucleotide sequence ID" value="NC_003212.1"/>
</dbReference>
<dbReference type="SMR" id="Q92AD4"/>
<dbReference type="STRING" id="272626.gene:17566346"/>
<dbReference type="GeneID" id="93235326"/>
<dbReference type="KEGG" id="lin:lin1988"/>
<dbReference type="eggNOG" id="COG0207">
    <property type="taxonomic scope" value="Bacteria"/>
</dbReference>
<dbReference type="HOGENOM" id="CLU_021669_0_0_9"/>
<dbReference type="OrthoDB" id="9774633at2"/>
<dbReference type="UniPathway" id="UPA00575"/>
<dbReference type="Proteomes" id="UP000002513">
    <property type="component" value="Chromosome"/>
</dbReference>
<dbReference type="GO" id="GO:0005829">
    <property type="term" value="C:cytosol"/>
    <property type="evidence" value="ECO:0007669"/>
    <property type="project" value="TreeGrafter"/>
</dbReference>
<dbReference type="GO" id="GO:0004799">
    <property type="term" value="F:thymidylate synthase activity"/>
    <property type="evidence" value="ECO:0007669"/>
    <property type="project" value="UniProtKB-UniRule"/>
</dbReference>
<dbReference type="GO" id="GO:0006231">
    <property type="term" value="P:dTMP biosynthetic process"/>
    <property type="evidence" value="ECO:0007669"/>
    <property type="project" value="UniProtKB-UniRule"/>
</dbReference>
<dbReference type="GO" id="GO:0006235">
    <property type="term" value="P:dTTP biosynthetic process"/>
    <property type="evidence" value="ECO:0007669"/>
    <property type="project" value="UniProtKB-UniRule"/>
</dbReference>
<dbReference type="GO" id="GO:0032259">
    <property type="term" value="P:methylation"/>
    <property type="evidence" value="ECO:0007669"/>
    <property type="project" value="UniProtKB-KW"/>
</dbReference>
<dbReference type="CDD" id="cd00351">
    <property type="entry name" value="TS_Pyrimidine_HMase"/>
    <property type="match status" value="1"/>
</dbReference>
<dbReference type="Gene3D" id="3.30.572.10">
    <property type="entry name" value="Thymidylate synthase/dCMP hydroxymethylase domain"/>
    <property type="match status" value="1"/>
</dbReference>
<dbReference type="HAMAP" id="MF_00008">
    <property type="entry name" value="Thymidy_synth_bact"/>
    <property type="match status" value="1"/>
</dbReference>
<dbReference type="InterPro" id="IPR045097">
    <property type="entry name" value="Thymidate_synth/dCMP_Mease"/>
</dbReference>
<dbReference type="InterPro" id="IPR023451">
    <property type="entry name" value="Thymidate_synth/dCMP_Mease_dom"/>
</dbReference>
<dbReference type="InterPro" id="IPR036926">
    <property type="entry name" value="Thymidate_synth/dCMP_Mease_sf"/>
</dbReference>
<dbReference type="InterPro" id="IPR000398">
    <property type="entry name" value="Thymidylate_synthase"/>
</dbReference>
<dbReference type="InterPro" id="IPR020940">
    <property type="entry name" value="Thymidylate_synthase_AS"/>
</dbReference>
<dbReference type="NCBIfam" id="NF002496">
    <property type="entry name" value="PRK01827.1-2"/>
    <property type="match status" value="1"/>
</dbReference>
<dbReference type="NCBIfam" id="TIGR03284">
    <property type="entry name" value="thym_sym"/>
    <property type="match status" value="1"/>
</dbReference>
<dbReference type="PANTHER" id="PTHR11548:SF9">
    <property type="entry name" value="THYMIDYLATE SYNTHASE"/>
    <property type="match status" value="1"/>
</dbReference>
<dbReference type="PANTHER" id="PTHR11548">
    <property type="entry name" value="THYMIDYLATE SYNTHASE 1"/>
    <property type="match status" value="1"/>
</dbReference>
<dbReference type="Pfam" id="PF00303">
    <property type="entry name" value="Thymidylat_synt"/>
    <property type="match status" value="1"/>
</dbReference>
<dbReference type="PRINTS" id="PR00108">
    <property type="entry name" value="THYMDSNTHASE"/>
</dbReference>
<dbReference type="SUPFAM" id="SSF55831">
    <property type="entry name" value="Thymidylate synthase/dCMP hydroxymethylase"/>
    <property type="match status" value="1"/>
</dbReference>
<dbReference type="PROSITE" id="PS00091">
    <property type="entry name" value="THYMIDYLATE_SYNTHASE"/>
    <property type="match status" value="1"/>
</dbReference>
<comment type="function">
    <text evidence="1">Catalyzes the reductive methylation of 2'-deoxyuridine-5'-monophosphate (dUMP) to 2'-deoxythymidine-5'-monophosphate (dTMP) while utilizing 5,10-methylenetetrahydrofolate (mTHF) as the methyl donor and reductant in the reaction, yielding dihydrofolate (DHF) as a by-product. This enzymatic reaction provides an intracellular de novo source of dTMP, an essential precursor for DNA biosynthesis.</text>
</comment>
<comment type="catalytic activity">
    <reaction evidence="1">
        <text>dUMP + (6R)-5,10-methylene-5,6,7,8-tetrahydrofolate = 7,8-dihydrofolate + dTMP</text>
        <dbReference type="Rhea" id="RHEA:12104"/>
        <dbReference type="ChEBI" id="CHEBI:15636"/>
        <dbReference type="ChEBI" id="CHEBI:57451"/>
        <dbReference type="ChEBI" id="CHEBI:63528"/>
        <dbReference type="ChEBI" id="CHEBI:246422"/>
        <dbReference type="EC" id="2.1.1.45"/>
    </reaction>
</comment>
<comment type="pathway">
    <text evidence="1">Pyrimidine metabolism; dTTP biosynthesis.</text>
</comment>
<comment type="subunit">
    <text evidence="1">Homodimer.</text>
</comment>
<comment type="subcellular location">
    <subcellularLocation>
        <location evidence="1">Cytoplasm</location>
    </subcellularLocation>
</comment>
<comment type="similarity">
    <text evidence="1">Belongs to the thymidylate synthase family. Bacterial-type ThyA subfamily.</text>
</comment>
<protein>
    <recommendedName>
        <fullName evidence="1">Thymidylate synthase</fullName>
        <shortName evidence="1">TS</shortName>
        <shortName evidence="1">TSase</shortName>
        <ecNumber evidence="1">2.1.1.45</ecNumber>
    </recommendedName>
</protein>
<name>TYSY_LISIN</name>